<keyword id="KW-0378">Hydrolase</keyword>
<keyword id="KW-0460">Magnesium</keyword>
<keyword id="KW-0479">Metal-binding</keyword>
<reference key="1">
    <citation type="journal article" date="2008" name="Antimicrob. Agents Chemother.">
        <title>Mutated response regulator graR is responsible for phenotypic conversion of Staphylococcus aureus from heterogeneous vancomycin-intermediate resistance to vancomycin-intermediate resistance.</title>
        <authorList>
            <person name="Neoh H.-M."/>
            <person name="Cui L."/>
            <person name="Yuzawa H."/>
            <person name="Takeuchi F."/>
            <person name="Matsuo M."/>
            <person name="Hiramatsu K."/>
        </authorList>
    </citation>
    <scope>NUCLEOTIDE SEQUENCE [LARGE SCALE GENOMIC DNA]</scope>
    <source>
        <strain>Mu3 / ATCC 700698</strain>
    </source>
</reference>
<accession>A7X3Y3</accession>
<comment type="function">
    <text evidence="1">Has nucleoside phosphatase activity towards nucleoside triphosphates and nucleoside diphosphates.</text>
</comment>
<comment type="catalytic activity">
    <reaction evidence="1">
        <text>a ribonucleoside 5'-triphosphate + H2O = a ribonucleoside 5'-diphosphate + phosphate + H(+)</text>
        <dbReference type="Rhea" id="RHEA:23680"/>
        <dbReference type="ChEBI" id="CHEBI:15377"/>
        <dbReference type="ChEBI" id="CHEBI:15378"/>
        <dbReference type="ChEBI" id="CHEBI:43474"/>
        <dbReference type="ChEBI" id="CHEBI:57930"/>
        <dbReference type="ChEBI" id="CHEBI:61557"/>
        <dbReference type="EC" id="3.6.1.15"/>
    </reaction>
</comment>
<comment type="catalytic activity">
    <reaction evidence="1">
        <text>a ribonucleoside 5'-diphosphate + H2O = a ribonucleoside 5'-phosphate + phosphate + H(+)</text>
        <dbReference type="Rhea" id="RHEA:36799"/>
        <dbReference type="ChEBI" id="CHEBI:15377"/>
        <dbReference type="ChEBI" id="CHEBI:15378"/>
        <dbReference type="ChEBI" id="CHEBI:43474"/>
        <dbReference type="ChEBI" id="CHEBI:57930"/>
        <dbReference type="ChEBI" id="CHEBI:58043"/>
        <dbReference type="EC" id="3.6.1.6"/>
    </reaction>
</comment>
<comment type="cofactor">
    <cofactor evidence="1">
        <name>Mg(2+)</name>
        <dbReference type="ChEBI" id="CHEBI:18420"/>
    </cofactor>
</comment>
<comment type="similarity">
    <text evidence="1">Belongs to the Ntdp family.</text>
</comment>
<feature type="chain" id="PRO_1000069108" description="Nucleoside triphosphate/diphosphate phosphatase">
    <location>
        <begin position="1"/>
        <end position="180"/>
    </location>
</feature>
<feature type="active site" description="Proton donor" evidence="1">
    <location>
        <position position="26"/>
    </location>
</feature>
<feature type="binding site" evidence="1">
    <location>
        <position position="90"/>
    </location>
    <ligand>
        <name>Mg(2+)</name>
        <dbReference type="ChEBI" id="CHEBI:18420"/>
        <label>1</label>
    </ligand>
</feature>
<feature type="binding site" evidence="1">
    <location>
        <position position="106"/>
    </location>
    <ligand>
        <name>Mg(2+)</name>
        <dbReference type="ChEBI" id="CHEBI:18420"/>
        <label>1</label>
    </ligand>
</feature>
<feature type="binding site" evidence="1">
    <location>
        <position position="108"/>
    </location>
    <ligand>
        <name>Mg(2+)</name>
        <dbReference type="ChEBI" id="CHEBI:18420"/>
        <label>2</label>
    </ligand>
</feature>
<feature type="binding site" evidence="1">
    <location>
        <position position="110"/>
    </location>
    <ligand>
        <name>Mg(2+)</name>
        <dbReference type="ChEBI" id="CHEBI:18420"/>
        <label>1</label>
    </ligand>
</feature>
<feature type="binding site" evidence="1">
    <location>
        <position position="110"/>
    </location>
    <ligand>
        <name>Mg(2+)</name>
        <dbReference type="ChEBI" id="CHEBI:18420"/>
        <label>2</label>
    </ligand>
</feature>
<feature type="binding site" evidence="1">
    <location>
        <position position="123"/>
    </location>
    <ligand>
        <name>Mg(2+)</name>
        <dbReference type="ChEBI" id="CHEBI:18420"/>
        <label>2</label>
    </ligand>
</feature>
<feature type="binding site" evidence="1">
    <location>
        <position position="126"/>
    </location>
    <ligand>
        <name>Mg(2+)</name>
        <dbReference type="ChEBI" id="CHEBI:18420"/>
        <label>2</label>
    </ligand>
</feature>
<proteinExistence type="inferred from homology"/>
<sequence>MVRESIPKEGENIKIQSYKHDGKIHRVWSETTILKGTDHVVIGGNDHTLVTESDGRTWITREPAIVYFHSEYWFNVICMFREDGIYYYCNLSSPFVCDEEALKYIDYDLDIKVYPNGKYHLLDEDEYEQHMNQMNYPHDIDIILRRNVDILQQWIEQKKGPFAPDFIKVWKERYKKIRQY</sequence>
<protein>
    <recommendedName>
        <fullName evidence="1">Nucleoside triphosphate/diphosphate phosphatase</fullName>
        <ecNumber evidence="1">3.6.1.15</ecNumber>
        <ecNumber evidence="1">3.6.1.6</ecNumber>
    </recommendedName>
</protein>
<name>NTDP_STAA1</name>
<dbReference type="EC" id="3.6.1.15" evidence="1"/>
<dbReference type="EC" id="3.6.1.6" evidence="1"/>
<dbReference type="EMBL" id="AP009324">
    <property type="protein sequence ID" value="BAF78735.1"/>
    <property type="molecule type" value="Genomic_DNA"/>
</dbReference>
<dbReference type="RefSeq" id="WP_000251253.1">
    <property type="nucleotide sequence ID" value="NZ_CTYB01000038.1"/>
</dbReference>
<dbReference type="SMR" id="A7X3Y3"/>
<dbReference type="KEGG" id="saw:SAHV_1852"/>
<dbReference type="HOGENOM" id="CLU_109787_1_0_9"/>
<dbReference type="GO" id="GO:0000287">
    <property type="term" value="F:magnesium ion binding"/>
    <property type="evidence" value="ECO:0007669"/>
    <property type="project" value="UniProtKB-UniRule"/>
</dbReference>
<dbReference type="GO" id="GO:0017110">
    <property type="term" value="F:nucleoside diphosphate phosphatase activity"/>
    <property type="evidence" value="ECO:0007669"/>
    <property type="project" value="UniProtKB-UniRule"/>
</dbReference>
<dbReference type="GO" id="GO:0017111">
    <property type="term" value="F:ribonucleoside triphosphate phosphatase activity"/>
    <property type="evidence" value="ECO:0007669"/>
    <property type="project" value="UniProtKB-UniRule"/>
</dbReference>
<dbReference type="Gene3D" id="2.40.380.10">
    <property type="entry name" value="FomD-like"/>
    <property type="match status" value="1"/>
</dbReference>
<dbReference type="HAMAP" id="MF_01568">
    <property type="entry name" value="Ntdp"/>
    <property type="match status" value="1"/>
</dbReference>
<dbReference type="InterPro" id="IPR007295">
    <property type="entry name" value="DUF402"/>
</dbReference>
<dbReference type="InterPro" id="IPR035930">
    <property type="entry name" value="FomD-like_sf"/>
</dbReference>
<dbReference type="InterPro" id="IPR050212">
    <property type="entry name" value="Ntdp-like"/>
</dbReference>
<dbReference type="InterPro" id="IPR016882">
    <property type="entry name" value="SA1684"/>
</dbReference>
<dbReference type="NCBIfam" id="NF010183">
    <property type="entry name" value="PRK13662.1"/>
    <property type="match status" value="1"/>
</dbReference>
<dbReference type="PANTHER" id="PTHR39159">
    <property type="match status" value="1"/>
</dbReference>
<dbReference type="PANTHER" id="PTHR39159:SF1">
    <property type="entry name" value="UPF0374 PROTEIN YGAC"/>
    <property type="match status" value="1"/>
</dbReference>
<dbReference type="Pfam" id="PF04167">
    <property type="entry name" value="DUF402"/>
    <property type="match status" value="1"/>
</dbReference>
<dbReference type="PIRSF" id="PIRSF028345">
    <property type="entry name" value="UCP028345"/>
    <property type="match status" value="1"/>
</dbReference>
<dbReference type="SUPFAM" id="SSF159234">
    <property type="entry name" value="FomD-like"/>
    <property type="match status" value="1"/>
</dbReference>
<evidence type="ECO:0000255" key="1">
    <source>
        <dbReference type="HAMAP-Rule" id="MF_01568"/>
    </source>
</evidence>
<organism>
    <name type="scientific">Staphylococcus aureus (strain Mu3 / ATCC 700698)</name>
    <dbReference type="NCBI Taxonomy" id="418127"/>
    <lineage>
        <taxon>Bacteria</taxon>
        <taxon>Bacillati</taxon>
        <taxon>Bacillota</taxon>
        <taxon>Bacilli</taxon>
        <taxon>Bacillales</taxon>
        <taxon>Staphylococcaceae</taxon>
        <taxon>Staphylococcus</taxon>
    </lineage>
</organism>
<gene>
    <name type="ordered locus">SAHV_1852</name>
</gene>